<comment type="similarity">
    <text evidence="1">Belongs to the UPF0301 (AlgH) family.</text>
</comment>
<proteinExistence type="inferred from homology"/>
<evidence type="ECO:0000255" key="1">
    <source>
        <dbReference type="HAMAP-Rule" id="MF_00758"/>
    </source>
</evidence>
<gene>
    <name type="ordered locus">BCG_0069</name>
</gene>
<accession>A1KEK6</accession>
<sequence length="202" mass="21808">MVAPHEDPEDHVAPAAQRVRAGTLLLANTDLLEPTFRRSVIYIVEHNDGGTLGVVLNRPSETAVYNVLPQWAKLAAKPKTMFIGGPVKRDAALCLAVLRVGADPEGVPGLRHVAGRLVMVDLDADPEVLAAAVEGVRIYAGYSGWTIGQLEGEIERDDWIVLSALPSDVLVGPRADLWGQVLRRQPLPLSLLATHPIDLSRN</sequence>
<dbReference type="EMBL" id="AM408590">
    <property type="protein sequence ID" value="CAL70053.1"/>
    <property type="molecule type" value="Genomic_DNA"/>
</dbReference>
<dbReference type="RefSeq" id="WP_003400460.1">
    <property type="nucleotide sequence ID" value="NC_008769.1"/>
</dbReference>
<dbReference type="SMR" id="A1KEK6"/>
<dbReference type="KEGG" id="mbb:BCG_0069"/>
<dbReference type="HOGENOM" id="CLU_057596_2_0_11"/>
<dbReference type="Proteomes" id="UP000001472">
    <property type="component" value="Chromosome"/>
</dbReference>
<dbReference type="GO" id="GO:0005829">
    <property type="term" value="C:cytosol"/>
    <property type="evidence" value="ECO:0007669"/>
    <property type="project" value="TreeGrafter"/>
</dbReference>
<dbReference type="FunFam" id="3.40.1740.10:FF:000002">
    <property type="entry name" value="UPF0301 protein A5636_14805"/>
    <property type="match status" value="1"/>
</dbReference>
<dbReference type="Gene3D" id="3.40.1740.10">
    <property type="entry name" value="VC0467-like"/>
    <property type="match status" value="1"/>
</dbReference>
<dbReference type="HAMAP" id="MF_00758">
    <property type="entry name" value="UPF0301"/>
    <property type="match status" value="1"/>
</dbReference>
<dbReference type="InterPro" id="IPR003774">
    <property type="entry name" value="AlgH-like"/>
</dbReference>
<dbReference type="NCBIfam" id="NF001269">
    <property type="entry name" value="PRK00228.2-1"/>
    <property type="match status" value="1"/>
</dbReference>
<dbReference type="NCBIfam" id="NF001272">
    <property type="entry name" value="PRK00228.2-4"/>
    <property type="match status" value="1"/>
</dbReference>
<dbReference type="PANTHER" id="PTHR30327">
    <property type="entry name" value="UNCHARACTERIZED PROTEIN YQGE"/>
    <property type="match status" value="1"/>
</dbReference>
<dbReference type="PANTHER" id="PTHR30327:SF1">
    <property type="entry name" value="UPF0301 PROTEIN YQGE"/>
    <property type="match status" value="1"/>
</dbReference>
<dbReference type="Pfam" id="PF02622">
    <property type="entry name" value="DUF179"/>
    <property type="match status" value="1"/>
</dbReference>
<dbReference type="SUPFAM" id="SSF143456">
    <property type="entry name" value="VC0467-like"/>
    <property type="match status" value="1"/>
</dbReference>
<protein>
    <recommendedName>
        <fullName evidence="1">UPF0301 protein BCG_0069</fullName>
    </recommendedName>
</protein>
<reference key="1">
    <citation type="journal article" date="2007" name="Proc. Natl. Acad. Sci. U.S.A.">
        <title>Genome plasticity of BCG and impact on vaccine efficacy.</title>
        <authorList>
            <person name="Brosch R."/>
            <person name="Gordon S.V."/>
            <person name="Garnier T."/>
            <person name="Eiglmeier K."/>
            <person name="Frigui W."/>
            <person name="Valenti P."/>
            <person name="Dos Santos S."/>
            <person name="Duthoy S."/>
            <person name="Lacroix C."/>
            <person name="Garcia-Pelayo C."/>
            <person name="Inwald J.K."/>
            <person name="Golby P."/>
            <person name="Garcia J.N."/>
            <person name="Hewinson R.G."/>
            <person name="Behr M.A."/>
            <person name="Quail M.A."/>
            <person name="Churcher C."/>
            <person name="Barrell B.G."/>
            <person name="Parkhill J."/>
            <person name="Cole S.T."/>
        </authorList>
    </citation>
    <scope>NUCLEOTIDE SEQUENCE [LARGE SCALE GENOMIC DNA]</scope>
    <source>
        <strain>BCG / Pasteur 1173P2</strain>
    </source>
</reference>
<name>Y069_MYCBP</name>
<feature type="chain" id="PRO_1000046662" description="UPF0301 protein BCG_0069">
    <location>
        <begin position="1"/>
        <end position="202"/>
    </location>
</feature>
<organism>
    <name type="scientific">Mycobacterium bovis (strain BCG / Pasteur 1173P2)</name>
    <dbReference type="NCBI Taxonomy" id="410289"/>
    <lineage>
        <taxon>Bacteria</taxon>
        <taxon>Bacillati</taxon>
        <taxon>Actinomycetota</taxon>
        <taxon>Actinomycetes</taxon>
        <taxon>Mycobacteriales</taxon>
        <taxon>Mycobacteriaceae</taxon>
        <taxon>Mycobacterium</taxon>
        <taxon>Mycobacterium tuberculosis complex</taxon>
    </lineage>
</organism>